<reference key="1">
    <citation type="journal article" date="2005" name="Nature">
        <title>Generation and annotation of the DNA sequences of human chromosomes 2 and 4.</title>
        <authorList>
            <person name="Hillier L.W."/>
            <person name="Graves T.A."/>
            <person name="Fulton R.S."/>
            <person name="Fulton L.A."/>
            <person name="Pepin K.H."/>
            <person name="Minx P."/>
            <person name="Wagner-McPherson C."/>
            <person name="Layman D."/>
            <person name="Wylie K."/>
            <person name="Sekhon M."/>
            <person name="Becker M.C."/>
            <person name="Fewell G.A."/>
            <person name="Delehaunty K.D."/>
            <person name="Miner T.L."/>
            <person name="Nash W.E."/>
            <person name="Kremitzki C."/>
            <person name="Oddy L."/>
            <person name="Du H."/>
            <person name="Sun H."/>
            <person name="Bradshaw-Cordum H."/>
            <person name="Ali J."/>
            <person name="Carter J."/>
            <person name="Cordes M."/>
            <person name="Harris A."/>
            <person name="Isak A."/>
            <person name="van Brunt A."/>
            <person name="Nguyen C."/>
            <person name="Du F."/>
            <person name="Courtney L."/>
            <person name="Kalicki J."/>
            <person name="Ozersky P."/>
            <person name="Abbott S."/>
            <person name="Armstrong J."/>
            <person name="Belter E.A."/>
            <person name="Caruso L."/>
            <person name="Cedroni M."/>
            <person name="Cotton M."/>
            <person name="Davidson T."/>
            <person name="Desai A."/>
            <person name="Elliott G."/>
            <person name="Erb T."/>
            <person name="Fronick C."/>
            <person name="Gaige T."/>
            <person name="Haakenson W."/>
            <person name="Haglund K."/>
            <person name="Holmes A."/>
            <person name="Harkins R."/>
            <person name="Kim K."/>
            <person name="Kruchowski S.S."/>
            <person name="Strong C.M."/>
            <person name="Grewal N."/>
            <person name="Goyea E."/>
            <person name="Hou S."/>
            <person name="Levy A."/>
            <person name="Martinka S."/>
            <person name="Mead K."/>
            <person name="McLellan M.D."/>
            <person name="Meyer R."/>
            <person name="Randall-Maher J."/>
            <person name="Tomlinson C."/>
            <person name="Dauphin-Kohlberg S."/>
            <person name="Kozlowicz-Reilly A."/>
            <person name="Shah N."/>
            <person name="Swearengen-Shahid S."/>
            <person name="Snider J."/>
            <person name="Strong J.T."/>
            <person name="Thompson J."/>
            <person name="Yoakum M."/>
            <person name="Leonard S."/>
            <person name="Pearman C."/>
            <person name="Trani L."/>
            <person name="Radionenko M."/>
            <person name="Waligorski J.E."/>
            <person name="Wang C."/>
            <person name="Rock S.M."/>
            <person name="Tin-Wollam A.-M."/>
            <person name="Maupin R."/>
            <person name="Latreille P."/>
            <person name="Wendl M.C."/>
            <person name="Yang S.-P."/>
            <person name="Pohl C."/>
            <person name="Wallis J.W."/>
            <person name="Spieth J."/>
            <person name="Bieri T.A."/>
            <person name="Berkowicz N."/>
            <person name="Nelson J.O."/>
            <person name="Osborne J."/>
            <person name="Ding L."/>
            <person name="Meyer R."/>
            <person name="Sabo A."/>
            <person name="Shotland Y."/>
            <person name="Sinha P."/>
            <person name="Wohldmann P.E."/>
            <person name="Cook L.L."/>
            <person name="Hickenbotham M.T."/>
            <person name="Eldred J."/>
            <person name="Williams D."/>
            <person name="Jones T.A."/>
            <person name="She X."/>
            <person name="Ciccarelli F.D."/>
            <person name="Izaurralde E."/>
            <person name="Taylor J."/>
            <person name="Schmutz J."/>
            <person name="Myers R.M."/>
            <person name="Cox D.R."/>
            <person name="Huang X."/>
            <person name="McPherson J.D."/>
            <person name="Mardis E.R."/>
            <person name="Clifton S.W."/>
            <person name="Warren W.C."/>
            <person name="Chinwalla A.T."/>
            <person name="Eddy S.R."/>
            <person name="Marra M.A."/>
            <person name="Ovcharenko I."/>
            <person name="Furey T.S."/>
            <person name="Miller W."/>
            <person name="Eichler E.E."/>
            <person name="Bork P."/>
            <person name="Suyama M."/>
            <person name="Torrents D."/>
            <person name="Waterston R.H."/>
            <person name="Wilson R.K."/>
        </authorList>
    </citation>
    <scope>NUCLEOTIDE SEQUENCE [LARGE SCALE GENOMIC DNA]</scope>
</reference>
<reference key="2">
    <citation type="journal article" date="2000" name="DNA Res.">
        <title>Prediction of the coding sequences of unidentified human genes. XIX. The complete sequences of 100 new cDNA clones from brain which code for large proteins in vitro.</title>
        <authorList>
            <person name="Nagase T."/>
            <person name="Kikuno R."/>
            <person name="Hattori A."/>
            <person name="Kondo Y."/>
            <person name="Okumura K."/>
            <person name="Ohara O."/>
        </authorList>
    </citation>
    <scope>NUCLEOTIDE SEQUENCE [LARGE SCALE MRNA] OF 55-1074</scope>
    <scope>VARIANTS PRO-105 AND ASN-523</scope>
</reference>
<reference key="3">
    <citation type="journal article" date="2004" name="Nat. Genet.">
        <title>Complete sequencing and characterization of 21,243 full-length human cDNAs.</title>
        <authorList>
            <person name="Ota T."/>
            <person name="Suzuki Y."/>
            <person name="Nishikawa T."/>
            <person name="Otsuki T."/>
            <person name="Sugiyama T."/>
            <person name="Irie R."/>
            <person name="Wakamatsu A."/>
            <person name="Hayashi K."/>
            <person name="Sato H."/>
            <person name="Nagai K."/>
            <person name="Kimura K."/>
            <person name="Makita H."/>
            <person name="Sekine M."/>
            <person name="Obayashi M."/>
            <person name="Nishi T."/>
            <person name="Shibahara T."/>
            <person name="Tanaka T."/>
            <person name="Ishii S."/>
            <person name="Yamamoto J."/>
            <person name="Saito K."/>
            <person name="Kawai Y."/>
            <person name="Isono Y."/>
            <person name="Nakamura Y."/>
            <person name="Nagahari K."/>
            <person name="Murakami K."/>
            <person name="Yasuda T."/>
            <person name="Iwayanagi T."/>
            <person name="Wagatsuma M."/>
            <person name="Shiratori A."/>
            <person name="Sudo H."/>
            <person name="Hosoiri T."/>
            <person name="Kaku Y."/>
            <person name="Kodaira H."/>
            <person name="Kondo H."/>
            <person name="Sugawara M."/>
            <person name="Takahashi M."/>
            <person name="Kanda K."/>
            <person name="Yokoi T."/>
            <person name="Furuya T."/>
            <person name="Kikkawa E."/>
            <person name="Omura Y."/>
            <person name="Abe K."/>
            <person name="Kamihara K."/>
            <person name="Katsuta N."/>
            <person name="Sato K."/>
            <person name="Tanikawa M."/>
            <person name="Yamazaki M."/>
            <person name="Ninomiya K."/>
            <person name="Ishibashi T."/>
            <person name="Yamashita H."/>
            <person name="Murakawa K."/>
            <person name="Fujimori K."/>
            <person name="Tanai H."/>
            <person name="Kimata M."/>
            <person name="Watanabe M."/>
            <person name="Hiraoka S."/>
            <person name="Chiba Y."/>
            <person name="Ishida S."/>
            <person name="Ono Y."/>
            <person name="Takiguchi S."/>
            <person name="Watanabe S."/>
            <person name="Yosida M."/>
            <person name="Hotuta T."/>
            <person name="Kusano J."/>
            <person name="Kanehori K."/>
            <person name="Takahashi-Fujii A."/>
            <person name="Hara H."/>
            <person name="Tanase T.-O."/>
            <person name="Nomura Y."/>
            <person name="Togiya S."/>
            <person name="Komai F."/>
            <person name="Hara R."/>
            <person name="Takeuchi K."/>
            <person name="Arita M."/>
            <person name="Imose N."/>
            <person name="Musashino K."/>
            <person name="Yuuki H."/>
            <person name="Oshima A."/>
            <person name="Sasaki N."/>
            <person name="Aotsuka S."/>
            <person name="Yoshikawa Y."/>
            <person name="Matsunawa H."/>
            <person name="Ichihara T."/>
            <person name="Shiohata N."/>
            <person name="Sano S."/>
            <person name="Moriya S."/>
            <person name="Momiyama H."/>
            <person name="Satoh N."/>
            <person name="Takami S."/>
            <person name="Terashima Y."/>
            <person name="Suzuki O."/>
            <person name="Nakagawa S."/>
            <person name="Senoh A."/>
            <person name="Mizoguchi H."/>
            <person name="Goto Y."/>
            <person name="Shimizu F."/>
            <person name="Wakebe H."/>
            <person name="Hishigaki H."/>
            <person name="Watanabe T."/>
            <person name="Sugiyama A."/>
            <person name="Takemoto M."/>
            <person name="Kawakami B."/>
            <person name="Yamazaki M."/>
            <person name="Watanabe K."/>
            <person name="Kumagai A."/>
            <person name="Itakura S."/>
            <person name="Fukuzumi Y."/>
            <person name="Fujimori Y."/>
            <person name="Komiyama M."/>
            <person name="Tashiro H."/>
            <person name="Tanigami A."/>
            <person name="Fujiwara T."/>
            <person name="Ono T."/>
            <person name="Yamada K."/>
            <person name="Fujii Y."/>
            <person name="Ozaki K."/>
            <person name="Hirao M."/>
            <person name="Ohmori Y."/>
            <person name="Kawabata A."/>
            <person name="Hikiji T."/>
            <person name="Kobatake N."/>
            <person name="Inagaki H."/>
            <person name="Ikema Y."/>
            <person name="Okamoto S."/>
            <person name="Okitani R."/>
            <person name="Kawakami T."/>
            <person name="Noguchi S."/>
            <person name="Itoh T."/>
            <person name="Shigeta K."/>
            <person name="Senba T."/>
            <person name="Matsumura K."/>
            <person name="Nakajima Y."/>
            <person name="Mizuno T."/>
            <person name="Morinaga M."/>
            <person name="Sasaki M."/>
            <person name="Togashi T."/>
            <person name="Oyama M."/>
            <person name="Hata H."/>
            <person name="Watanabe M."/>
            <person name="Komatsu T."/>
            <person name="Mizushima-Sugano J."/>
            <person name="Satoh T."/>
            <person name="Shirai Y."/>
            <person name="Takahashi Y."/>
            <person name="Nakagawa K."/>
            <person name="Okumura K."/>
            <person name="Nagase T."/>
            <person name="Nomura N."/>
            <person name="Kikuchi H."/>
            <person name="Masuho Y."/>
            <person name="Yamashita R."/>
            <person name="Nakai K."/>
            <person name="Yada T."/>
            <person name="Nakamura Y."/>
            <person name="Ohara O."/>
            <person name="Isogai T."/>
            <person name="Sugano S."/>
        </authorList>
    </citation>
    <scope>NUCLEOTIDE SEQUENCE [LARGE SCALE MRNA] OF 442-1074</scope>
    <scope>VARIANT ASN-523</scope>
    <source>
        <tissue>Testis</tissue>
    </source>
</reference>
<reference key="4">
    <citation type="journal article" date="2015" name="Mol. Cell. Proteomics">
        <title>Functional Proteomic Analysis of Repressive Histone Methyltransferase Complexes Reveals ZNF518B as a G9A Regulator.</title>
        <authorList>
            <person name="Maier V.K."/>
            <person name="Feeney C.M."/>
            <person name="Taylor J.E."/>
            <person name="Creech A.L."/>
            <person name="Qiao J.W."/>
            <person name="Szanto A."/>
            <person name="Das P.P."/>
            <person name="Chevrier N."/>
            <person name="Cifuentes-Rojas C."/>
            <person name="Orkin S.H."/>
            <person name="Carr S.A."/>
            <person name="Jaffe J.D."/>
            <person name="Mertins P."/>
            <person name="Lee J.T."/>
        </authorList>
    </citation>
    <scope>FUNCTION</scope>
</reference>
<reference key="5">
    <citation type="journal article" date="2017" name="Nat. Struct. Mol. Biol.">
        <title>Site-specific mapping of the human SUMO proteome reveals co-modification with phosphorylation.</title>
        <authorList>
            <person name="Hendriks I.A."/>
            <person name="Lyon D."/>
            <person name="Young C."/>
            <person name="Jensen L.J."/>
            <person name="Vertegaal A.C."/>
            <person name="Nielsen M.L."/>
        </authorList>
    </citation>
    <scope>SUMOYLATION [LARGE SCALE ANALYSIS] AT LYS-482; LYS-491; LYS-558; LYS-594; LYS-809; LYS-846 AND LYS-860</scope>
    <scope>IDENTIFICATION BY MASS SPECTROMETRY [LARGE SCALE ANALYSIS]</scope>
</reference>
<organism>
    <name type="scientific">Homo sapiens</name>
    <name type="common">Human</name>
    <dbReference type="NCBI Taxonomy" id="9606"/>
    <lineage>
        <taxon>Eukaryota</taxon>
        <taxon>Metazoa</taxon>
        <taxon>Chordata</taxon>
        <taxon>Craniata</taxon>
        <taxon>Vertebrata</taxon>
        <taxon>Euteleostomi</taxon>
        <taxon>Mammalia</taxon>
        <taxon>Eutheria</taxon>
        <taxon>Euarchontoglires</taxon>
        <taxon>Primates</taxon>
        <taxon>Haplorrhini</taxon>
        <taxon>Catarrhini</taxon>
        <taxon>Hominidae</taxon>
        <taxon>Homo</taxon>
    </lineage>
</organism>
<keyword id="KW-0156">Chromatin regulator</keyword>
<keyword id="KW-0238">DNA-binding</keyword>
<keyword id="KW-1017">Isopeptide bond</keyword>
<keyword id="KW-0479">Metal-binding</keyword>
<keyword id="KW-0539">Nucleus</keyword>
<keyword id="KW-1267">Proteomics identification</keyword>
<keyword id="KW-1185">Reference proteome</keyword>
<keyword id="KW-0677">Repeat</keyword>
<keyword id="KW-0804">Transcription</keyword>
<keyword id="KW-0805">Transcription regulation</keyword>
<keyword id="KW-0832">Ubl conjugation</keyword>
<keyword id="KW-0862">Zinc</keyword>
<keyword id="KW-0863">Zinc-finger</keyword>
<accession>Q9C0D4</accession>
<accession>Q96LN8</accession>
<evidence type="ECO:0000250" key="1">
    <source>
        <dbReference type="UniProtKB" id="B2RRE4"/>
    </source>
</evidence>
<evidence type="ECO:0000255" key="2">
    <source>
        <dbReference type="PROSITE-ProRule" id="PRU00042"/>
    </source>
</evidence>
<evidence type="ECO:0000256" key="3">
    <source>
        <dbReference type="SAM" id="MobiDB-lite"/>
    </source>
</evidence>
<evidence type="ECO:0000269" key="4">
    <source>
    </source>
</evidence>
<evidence type="ECO:0000269" key="5">
    <source>
    </source>
</evidence>
<evidence type="ECO:0000305" key="6"/>
<evidence type="ECO:0007744" key="7">
    <source>
    </source>
</evidence>
<gene>
    <name type="primary">ZNF518B</name>
    <name type="synonym">KIAA1729</name>
</gene>
<dbReference type="EMBL" id="AC110768">
    <property type="status" value="NOT_ANNOTATED_CDS"/>
    <property type="molecule type" value="Genomic_DNA"/>
</dbReference>
<dbReference type="EMBL" id="AB051516">
    <property type="protein sequence ID" value="BAB21820.1"/>
    <property type="molecule type" value="mRNA"/>
</dbReference>
<dbReference type="EMBL" id="AK058072">
    <property type="protein sequence ID" value="BAB71650.2"/>
    <property type="molecule type" value="mRNA"/>
</dbReference>
<dbReference type="CCDS" id="CCDS33960.1"/>
<dbReference type="RefSeq" id="NP_001362745.1">
    <property type="nucleotide sequence ID" value="NM_001375816.1"/>
</dbReference>
<dbReference type="RefSeq" id="NP_001362746.1">
    <property type="nucleotide sequence ID" value="NM_001375817.1"/>
</dbReference>
<dbReference type="RefSeq" id="NP_444270.2">
    <property type="nucleotide sequence ID" value="NM_053042.2"/>
</dbReference>
<dbReference type="RefSeq" id="XP_005248250.1">
    <property type="nucleotide sequence ID" value="XM_005248193.2"/>
</dbReference>
<dbReference type="RefSeq" id="XP_016864273.1">
    <property type="nucleotide sequence ID" value="XM_017008784.1"/>
</dbReference>
<dbReference type="RefSeq" id="XP_016864274.1">
    <property type="nucleotide sequence ID" value="XM_017008785.1"/>
</dbReference>
<dbReference type="RefSeq" id="XP_016864275.1">
    <property type="nucleotide sequence ID" value="XM_017008786.2"/>
</dbReference>
<dbReference type="RefSeq" id="XP_024310032.1">
    <property type="nucleotide sequence ID" value="XM_024454264.2"/>
</dbReference>
<dbReference type="RefSeq" id="XP_047272289.1">
    <property type="nucleotide sequence ID" value="XM_047416333.1"/>
</dbReference>
<dbReference type="BioGRID" id="124544">
    <property type="interactions" value="17"/>
</dbReference>
<dbReference type="FunCoup" id="Q9C0D4">
    <property type="interactions" value="325"/>
</dbReference>
<dbReference type="IntAct" id="Q9C0D4">
    <property type="interactions" value="16"/>
</dbReference>
<dbReference type="STRING" id="9606.ENSP00000317614"/>
<dbReference type="iPTMnet" id="Q9C0D4"/>
<dbReference type="PhosphoSitePlus" id="Q9C0D4"/>
<dbReference type="BioMuta" id="ZNF518B"/>
<dbReference type="DMDM" id="166979949"/>
<dbReference type="jPOST" id="Q9C0D4"/>
<dbReference type="MassIVE" id="Q9C0D4"/>
<dbReference type="PaxDb" id="9606-ENSP00000317614"/>
<dbReference type="PeptideAtlas" id="Q9C0D4"/>
<dbReference type="ProteomicsDB" id="80013"/>
<dbReference type="Pumba" id="Q9C0D4"/>
<dbReference type="Antibodypedia" id="22893">
    <property type="antibodies" value="16 antibodies from 7 providers"/>
</dbReference>
<dbReference type="DNASU" id="85460"/>
<dbReference type="Ensembl" id="ENST00000326756.4">
    <property type="protein sequence ID" value="ENSP00000317614.3"/>
    <property type="gene ID" value="ENSG00000178163.8"/>
</dbReference>
<dbReference type="GeneID" id="85460"/>
<dbReference type="KEGG" id="hsa:85460"/>
<dbReference type="MANE-Select" id="ENST00000326756.4">
    <property type="protein sequence ID" value="ENSP00000317614.3"/>
    <property type="RefSeq nucleotide sequence ID" value="NM_053042.3"/>
    <property type="RefSeq protein sequence ID" value="NP_444270.2"/>
</dbReference>
<dbReference type="UCSC" id="uc003gmn.4">
    <property type="organism name" value="human"/>
</dbReference>
<dbReference type="AGR" id="HGNC:29365"/>
<dbReference type="CTD" id="85460"/>
<dbReference type="DisGeNET" id="85460"/>
<dbReference type="GeneCards" id="ZNF518B"/>
<dbReference type="HGNC" id="HGNC:29365">
    <property type="gene designation" value="ZNF518B"/>
</dbReference>
<dbReference type="HPA" id="ENSG00000178163">
    <property type="expression patterns" value="Low tissue specificity"/>
</dbReference>
<dbReference type="MIM" id="617734">
    <property type="type" value="gene"/>
</dbReference>
<dbReference type="neXtProt" id="NX_Q9C0D4"/>
<dbReference type="OpenTargets" id="ENSG00000178163"/>
<dbReference type="PharmGKB" id="PA162410199"/>
<dbReference type="VEuPathDB" id="HostDB:ENSG00000178163"/>
<dbReference type="eggNOG" id="KOG1721">
    <property type="taxonomic scope" value="Eukaryota"/>
</dbReference>
<dbReference type="GeneTree" id="ENSGT00940000160595"/>
<dbReference type="HOGENOM" id="CLU_015341_0_0_1"/>
<dbReference type="InParanoid" id="Q9C0D4"/>
<dbReference type="OMA" id="CEYGAVR"/>
<dbReference type="OrthoDB" id="8069632at2759"/>
<dbReference type="PAN-GO" id="Q9C0D4">
    <property type="GO annotations" value="4 GO annotations based on evolutionary models"/>
</dbReference>
<dbReference type="PhylomeDB" id="Q9C0D4"/>
<dbReference type="TreeFam" id="TF332842"/>
<dbReference type="PathwayCommons" id="Q9C0D4"/>
<dbReference type="SignaLink" id="Q9C0D4"/>
<dbReference type="BioGRID-ORCS" id="85460">
    <property type="hits" value="11 hits in 1160 CRISPR screens"/>
</dbReference>
<dbReference type="ChiTaRS" id="ZNF518B">
    <property type="organism name" value="human"/>
</dbReference>
<dbReference type="GenomeRNAi" id="85460"/>
<dbReference type="Pharos" id="Q9C0D4">
    <property type="development level" value="Tdark"/>
</dbReference>
<dbReference type="PRO" id="PR:Q9C0D4"/>
<dbReference type="Proteomes" id="UP000005640">
    <property type="component" value="Chromosome 4"/>
</dbReference>
<dbReference type="RNAct" id="Q9C0D4">
    <property type="molecule type" value="protein"/>
</dbReference>
<dbReference type="Bgee" id="ENSG00000178163">
    <property type="expression patterns" value="Expressed in male germ line stem cell (sensu Vertebrata) in testis and 174 other cell types or tissues"/>
</dbReference>
<dbReference type="ExpressionAtlas" id="Q9C0D4">
    <property type="expression patterns" value="baseline and differential"/>
</dbReference>
<dbReference type="GO" id="GO:0005634">
    <property type="term" value="C:nucleus"/>
    <property type="evidence" value="ECO:0007669"/>
    <property type="project" value="UniProtKB-SubCell"/>
</dbReference>
<dbReference type="GO" id="GO:0003677">
    <property type="term" value="F:DNA binding"/>
    <property type="evidence" value="ECO:0007669"/>
    <property type="project" value="UniProtKB-KW"/>
</dbReference>
<dbReference type="GO" id="GO:0000981">
    <property type="term" value="F:DNA-binding transcription factor activity, RNA polymerase II-specific"/>
    <property type="evidence" value="ECO:0000318"/>
    <property type="project" value="GO_Central"/>
</dbReference>
<dbReference type="GO" id="GO:0008270">
    <property type="term" value="F:zinc ion binding"/>
    <property type="evidence" value="ECO:0007669"/>
    <property type="project" value="UniProtKB-KW"/>
</dbReference>
<dbReference type="GO" id="GO:0006325">
    <property type="term" value="P:chromatin organization"/>
    <property type="evidence" value="ECO:0007669"/>
    <property type="project" value="UniProtKB-KW"/>
</dbReference>
<dbReference type="GO" id="GO:0006357">
    <property type="term" value="P:regulation of transcription by RNA polymerase II"/>
    <property type="evidence" value="ECO:0000318"/>
    <property type="project" value="GO_Central"/>
</dbReference>
<dbReference type="FunFam" id="3.30.160.60:FF:004065">
    <property type="match status" value="1"/>
</dbReference>
<dbReference type="Gene3D" id="3.30.160.60">
    <property type="entry name" value="Classic Zinc Finger"/>
    <property type="match status" value="1"/>
</dbReference>
<dbReference type="InterPro" id="IPR036236">
    <property type="entry name" value="Znf_C2H2_sf"/>
</dbReference>
<dbReference type="InterPro" id="IPR013087">
    <property type="entry name" value="Znf_C2H2_type"/>
</dbReference>
<dbReference type="PANTHER" id="PTHR24379:SF121">
    <property type="entry name" value="C2H2-TYPE DOMAIN-CONTAINING PROTEIN"/>
    <property type="match status" value="1"/>
</dbReference>
<dbReference type="PANTHER" id="PTHR24379">
    <property type="entry name" value="KRAB AND ZINC FINGER DOMAIN-CONTAINING"/>
    <property type="match status" value="1"/>
</dbReference>
<dbReference type="SMART" id="SM00355">
    <property type="entry name" value="ZnF_C2H2"/>
    <property type="match status" value="4"/>
</dbReference>
<dbReference type="SUPFAM" id="SSF57667">
    <property type="entry name" value="beta-beta-alpha zinc fingers"/>
    <property type="match status" value="1"/>
</dbReference>
<dbReference type="PROSITE" id="PS00028">
    <property type="entry name" value="ZINC_FINGER_C2H2_1"/>
    <property type="match status" value="1"/>
</dbReference>
<dbReference type="PROSITE" id="PS50157">
    <property type="entry name" value="ZINC_FINGER_C2H2_2"/>
    <property type="match status" value="1"/>
</dbReference>
<name>Z518B_HUMAN</name>
<comment type="function">
    <text evidence="1">Through its association with the EHMT1-EHMT2/G9A and PRC2/EED-EZH2 histone methyltransferase complexes may function in gene silencing, regulating repressive post-translational methylation of histone tails at promoters of target genes.</text>
</comment>
<comment type="subcellular location">
    <subcellularLocation>
        <location evidence="1">Nucleus</location>
    </subcellularLocation>
</comment>
<comment type="similarity">
    <text evidence="6">Belongs to the krueppel C2H2-type zinc-finger protein family.</text>
</comment>
<proteinExistence type="evidence at protein level"/>
<protein>
    <recommendedName>
        <fullName>Zinc finger protein 518B</fullName>
    </recommendedName>
</protein>
<feature type="chain" id="PRO_0000317255" description="Zinc finger protein 518B">
    <location>
        <begin position="1"/>
        <end position="1074"/>
    </location>
</feature>
<feature type="zinc finger region" description="C2H2-type 1" evidence="2">
    <location>
        <begin position="162"/>
        <end position="184"/>
    </location>
</feature>
<feature type="zinc finger region" description="C2H2-type 2" evidence="2">
    <location>
        <begin position="190"/>
        <end position="213"/>
    </location>
</feature>
<feature type="zinc finger region" description="C2H2-type 3" evidence="2">
    <location>
        <begin position="1036"/>
        <end position="1058"/>
    </location>
</feature>
<feature type="region of interest" description="Disordered" evidence="3">
    <location>
        <begin position="12"/>
        <end position="36"/>
    </location>
</feature>
<feature type="region of interest" description="Disordered" evidence="3">
    <location>
        <begin position="568"/>
        <end position="590"/>
    </location>
</feature>
<feature type="region of interest" description="Disordered" evidence="3">
    <location>
        <begin position="603"/>
        <end position="632"/>
    </location>
</feature>
<feature type="region of interest" description="Disordered" evidence="3">
    <location>
        <begin position="678"/>
        <end position="704"/>
    </location>
</feature>
<feature type="compositionally biased region" description="Polar residues" evidence="3">
    <location>
        <begin position="12"/>
        <end position="24"/>
    </location>
</feature>
<feature type="compositionally biased region" description="Basic and acidic residues" evidence="3">
    <location>
        <begin position="570"/>
        <end position="582"/>
    </location>
</feature>
<feature type="compositionally biased region" description="Basic and acidic residues" evidence="3">
    <location>
        <begin position="604"/>
        <end position="622"/>
    </location>
</feature>
<feature type="compositionally biased region" description="Polar residues" evidence="3">
    <location>
        <begin position="693"/>
        <end position="704"/>
    </location>
</feature>
<feature type="cross-link" description="Glycyl lysine isopeptide (Lys-Gly) (interchain with G-Cter in SUMO2)" evidence="7">
    <location>
        <position position="482"/>
    </location>
</feature>
<feature type="cross-link" description="Glycyl lysine isopeptide (Lys-Gly) (interchain with G-Cter in SUMO2)" evidence="7">
    <location>
        <position position="491"/>
    </location>
</feature>
<feature type="cross-link" description="Glycyl lysine isopeptide (Lys-Gly) (interchain with G-Cter in SUMO2)" evidence="7">
    <location>
        <position position="558"/>
    </location>
</feature>
<feature type="cross-link" description="Glycyl lysine isopeptide (Lys-Gly) (interchain with G-Cter in SUMO2)" evidence="7">
    <location>
        <position position="594"/>
    </location>
</feature>
<feature type="cross-link" description="Glycyl lysine isopeptide (Lys-Gly) (interchain with G-Cter in SUMO2)" evidence="7">
    <location>
        <position position="809"/>
    </location>
</feature>
<feature type="cross-link" description="Glycyl lysine isopeptide (Lys-Gly) (interchain with G-Cter in SUMO2)" evidence="7">
    <location>
        <position position="846"/>
    </location>
</feature>
<feature type="cross-link" description="Glycyl lysine isopeptide (Lys-Gly) (interchain with G-Cter in SUMO2)" evidence="7">
    <location>
        <position position="860"/>
    </location>
</feature>
<feature type="sequence variant" id="VAR_061955" description="In dbSNP:rs10007352.">
    <original>G</original>
    <variation>S</variation>
    <location>
        <position position="92"/>
    </location>
</feature>
<feature type="sequence variant" id="VAR_038491" description="In dbSNP:rs10016702." evidence="4">
    <original>S</original>
    <variation>P</variation>
    <location>
        <position position="105"/>
    </location>
</feature>
<feature type="sequence variant" id="VAR_038492" description="In dbSNP:rs9291410." evidence="4 5">
    <original>S</original>
    <variation>N</variation>
    <location>
        <position position="523"/>
    </location>
</feature>
<feature type="sequence conflict" description="In Ref. 3; BAB71650." evidence="6" ref="3">
    <original>K</original>
    <variation>E</variation>
    <location>
        <position position="452"/>
    </location>
</feature>
<sequence>MKDIGQQLYTTHLNGGHNSLTMSPKQPDANGAPRPNRQEAQTLLYQGSEAEAAMMTIATCAKCKSVHKISLQDLQKGTGKDGMYVCFQCSLGAAPPNFHFVSNNSSATHVGNKTENFSSSVNSKFKVRNFKPGKYYCDKCRFSTKDPLQYKKHTLQHEEIKFICSHCSYISYTKGEFQRHLVKHTGIFPYQCEYCDYGAIRNDYIVKHTKRVHERAGAKRPVKAVAKLEPKRTGTSKQNPELLKASNPRTTFQNKWSDQLSGFSLHANKDKMHNIMLLPEPKEYQKDVVCIPNKMTLSEPNEVNLFENKNVEVEVLSPAKEPVQPGMPLTVVAPAELVVPANCLAQLIDVKVVNGTQQLVLKLFPLEENNCLEAGRDNGGNSERMVKEKGSNEQEKVLSAEKTKSLTVDGNVGKLVGIDSFQPSVQKQLKNVKWVRSYDFIMPNSSVHNNGKSFINSETIEDFQKKNNLYPHRTAFPSVALKGHSLASVFKNSVLRSLGAASNPFPYKAAVCFAESGRNLHSSSQQLLPFAASPATCSFSGEKGLLPVSENDLESTSKVNIPVKVVSSNRKQEDNQTEEHKAVSTVGQISSQHKSEYLHINITGEDRSQQPGDKPLELKNSERTNNTNDGPVISSVFSLSSGSENVPEGIKWNSSTSKIKSIELLRRKIAQLIESCGKPSSLASNSAHRRSVGQASKGTSKATSEGIQEINVSLTGLGHSTGTLQKPPNDGGITGNRQLTHQQIYPHFADGSNRKTKSRVARKAHVATPVLIPKGAVLRVLNSSENAHIIEATCEAPVSIPCSERQLIKPVPFCPVRQADSDLQPLRSERGPIDMSPNIETPLRPKLRKESAVCSTIHRKTGLLYGQQGSSELNKQGRLLSRSLSISRNKTKQVHLSRKKNKIQAEPSRCLKDPSIFQVARQLRLIAAKPDQLIKCPRRNQPVIVLNHPDVDSPEVTNVMKVINKYKGNVLKVVLSERTRCQLGIRRHHVRLTYQNAEEASQIKRQMMLKMKLKKVHKNNYQVVDSLPDDSSQCVFKCWFCGRLYEDQEEWMSHGQRHLIEATRDWDVLSSKGK</sequence>